<sequence length="144" mass="16242">MLLPKRVKYRRQHRPKTTGRSKGGNYVTFGEFGLQATTTSWITSRQIESARIAMTRYMKRGGKVWIKIFPHTPYTKKPLEVRMGAGKGAVEGWIAVVKPGRILFEVAGVSEEVAREALRLASHKLPVKTKFVKREELGGETNES</sequence>
<name>RL16_STAAR</name>
<protein>
    <recommendedName>
        <fullName evidence="1">Large ribosomal subunit protein uL16</fullName>
    </recommendedName>
    <alternativeName>
        <fullName evidence="3">50S ribosomal protein L16</fullName>
    </alternativeName>
</protein>
<accession>Q6GEJ0</accession>
<feature type="chain" id="PRO_0000062204" description="Large ribosomal subunit protein uL16">
    <location>
        <begin position="1"/>
        <end position="144"/>
    </location>
</feature>
<feature type="region of interest" description="Disordered" evidence="2">
    <location>
        <begin position="1"/>
        <end position="23"/>
    </location>
</feature>
<feature type="compositionally biased region" description="Basic residues" evidence="2">
    <location>
        <begin position="1"/>
        <end position="19"/>
    </location>
</feature>
<proteinExistence type="inferred from homology"/>
<comment type="function">
    <text evidence="1">Binds 23S rRNA and is also seen to make contacts with the A and possibly P site tRNAs.</text>
</comment>
<comment type="subunit">
    <text evidence="1">Part of the 50S ribosomal subunit.</text>
</comment>
<comment type="similarity">
    <text evidence="1">Belongs to the universal ribosomal protein uL16 family.</text>
</comment>
<keyword id="KW-0687">Ribonucleoprotein</keyword>
<keyword id="KW-0689">Ribosomal protein</keyword>
<keyword id="KW-0694">RNA-binding</keyword>
<keyword id="KW-0699">rRNA-binding</keyword>
<keyword id="KW-0820">tRNA-binding</keyword>
<dbReference type="EMBL" id="BX571856">
    <property type="protein sequence ID" value="CAG41309.1"/>
    <property type="molecule type" value="Genomic_DNA"/>
</dbReference>
<dbReference type="RefSeq" id="WP_000926310.1">
    <property type="nucleotide sequence ID" value="NC_002952.2"/>
</dbReference>
<dbReference type="SMR" id="Q6GEJ0"/>
<dbReference type="GeneID" id="98346555"/>
<dbReference type="KEGG" id="sar:SAR2328"/>
<dbReference type="HOGENOM" id="CLU_078858_2_1_9"/>
<dbReference type="Proteomes" id="UP000000596">
    <property type="component" value="Chromosome"/>
</dbReference>
<dbReference type="GO" id="GO:0022625">
    <property type="term" value="C:cytosolic large ribosomal subunit"/>
    <property type="evidence" value="ECO:0007669"/>
    <property type="project" value="TreeGrafter"/>
</dbReference>
<dbReference type="GO" id="GO:0019843">
    <property type="term" value="F:rRNA binding"/>
    <property type="evidence" value="ECO:0007669"/>
    <property type="project" value="UniProtKB-UniRule"/>
</dbReference>
<dbReference type="GO" id="GO:0003735">
    <property type="term" value="F:structural constituent of ribosome"/>
    <property type="evidence" value="ECO:0007669"/>
    <property type="project" value="InterPro"/>
</dbReference>
<dbReference type="GO" id="GO:0000049">
    <property type="term" value="F:tRNA binding"/>
    <property type="evidence" value="ECO:0007669"/>
    <property type="project" value="UniProtKB-KW"/>
</dbReference>
<dbReference type="GO" id="GO:0006412">
    <property type="term" value="P:translation"/>
    <property type="evidence" value="ECO:0007669"/>
    <property type="project" value="UniProtKB-UniRule"/>
</dbReference>
<dbReference type="CDD" id="cd01433">
    <property type="entry name" value="Ribosomal_L16_L10e"/>
    <property type="match status" value="1"/>
</dbReference>
<dbReference type="FunFam" id="3.90.1170.10:FF:000001">
    <property type="entry name" value="50S ribosomal protein L16"/>
    <property type="match status" value="1"/>
</dbReference>
<dbReference type="Gene3D" id="3.90.1170.10">
    <property type="entry name" value="Ribosomal protein L10e/L16"/>
    <property type="match status" value="1"/>
</dbReference>
<dbReference type="HAMAP" id="MF_01342">
    <property type="entry name" value="Ribosomal_uL16"/>
    <property type="match status" value="1"/>
</dbReference>
<dbReference type="InterPro" id="IPR047873">
    <property type="entry name" value="Ribosomal_uL16"/>
</dbReference>
<dbReference type="InterPro" id="IPR000114">
    <property type="entry name" value="Ribosomal_uL16_bact-type"/>
</dbReference>
<dbReference type="InterPro" id="IPR020798">
    <property type="entry name" value="Ribosomal_uL16_CS"/>
</dbReference>
<dbReference type="InterPro" id="IPR016180">
    <property type="entry name" value="Ribosomal_uL16_dom"/>
</dbReference>
<dbReference type="InterPro" id="IPR036920">
    <property type="entry name" value="Ribosomal_uL16_sf"/>
</dbReference>
<dbReference type="NCBIfam" id="TIGR01164">
    <property type="entry name" value="rplP_bact"/>
    <property type="match status" value="1"/>
</dbReference>
<dbReference type="PANTHER" id="PTHR12220">
    <property type="entry name" value="50S/60S RIBOSOMAL PROTEIN L16"/>
    <property type="match status" value="1"/>
</dbReference>
<dbReference type="PANTHER" id="PTHR12220:SF13">
    <property type="entry name" value="LARGE RIBOSOMAL SUBUNIT PROTEIN UL16M"/>
    <property type="match status" value="1"/>
</dbReference>
<dbReference type="Pfam" id="PF00252">
    <property type="entry name" value="Ribosomal_L16"/>
    <property type="match status" value="1"/>
</dbReference>
<dbReference type="PRINTS" id="PR00060">
    <property type="entry name" value="RIBOSOMALL16"/>
</dbReference>
<dbReference type="SUPFAM" id="SSF54686">
    <property type="entry name" value="Ribosomal protein L16p/L10e"/>
    <property type="match status" value="1"/>
</dbReference>
<dbReference type="PROSITE" id="PS00586">
    <property type="entry name" value="RIBOSOMAL_L16_1"/>
    <property type="match status" value="1"/>
</dbReference>
<dbReference type="PROSITE" id="PS00701">
    <property type="entry name" value="RIBOSOMAL_L16_2"/>
    <property type="match status" value="1"/>
</dbReference>
<gene>
    <name evidence="1" type="primary">rplP</name>
    <name type="ordered locus">SAR2328</name>
</gene>
<evidence type="ECO:0000255" key="1">
    <source>
        <dbReference type="HAMAP-Rule" id="MF_01342"/>
    </source>
</evidence>
<evidence type="ECO:0000256" key="2">
    <source>
        <dbReference type="SAM" id="MobiDB-lite"/>
    </source>
</evidence>
<evidence type="ECO:0000305" key="3"/>
<organism>
    <name type="scientific">Staphylococcus aureus (strain MRSA252)</name>
    <dbReference type="NCBI Taxonomy" id="282458"/>
    <lineage>
        <taxon>Bacteria</taxon>
        <taxon>Bacillati</taxon>
        <taxon>Bacillota</taxon>
        <taxon>Bacilli</taxon>
        <taxon>Bacillales</taxon>
        <taxon>Staphylococcaceae</taxon>
        <taxon>Staphylococcus</taxon>
    </lineage>
</organism>
<reference key="1">
    <citation type="journal article" date="2004" name="Proc. Natl. Acad. Sci. U.S.A.">
        <title>Complete genomes of two clinical Staphylococcus aureus strains: evidence for the rapid evolution of virulence and drug resistance.</title>
        <authorList>
            <person name="Holden M.T.G."/>
            <person name="Feil E.J."/>
            <person name="Lindsay J.A."/>
            <person name="Peacock S.J."/>
            <person name="Day N.P.J."/>
            <person name="Enright M.C."/>
            <person name="Foster T.J."/>
            <person name="Moore C.E."/>
            <person name="Hurst L."/>
            <person name="Atkin R."/>
            <person name="Barron A."/>
            <person name="Bason N."/>
            <person name="Bentley S.D."/>
            <person name="Chillingworth C."/>
            <person name="Chillingworth T."/>
            <person name="Churcher C."/>
            <person name="Clark L."/>
            <person name="Corton C."/>
            <person name="Cronin A."/>
            <person name="Doggett J."/>
            <person name="Dowd L."/>
            <person name="Feltwell T."/>
            <person name="Hance Z."/>
            <person name="Harris B."/>
            <person name="Hauser H."/>
            <person name="Holroyd S."/>
            <person name="Jagels K."/>
            <person name="James K.D."/>
            <person name="Lennard N."/>
            <person name="Line A."/>
            <person name="Mayes R."/>
            <person name="Moule S."/>
            <person name="Mungall K."/>
            <person name="Ormond D."/>
            <person name="Quail M.A."/>
            <person name="Rabbinowitsch E."/>
            <person name="Rutherford K.M."/>
            <person name="Sanders M."/>
            <person name="Sharp S."/>
            <person name="Simmonds M."/>
            <person name="Stevens K."/>
            <person name="Whitehead S."/>
            <person name="Barrell B.G."/>
            <person name="Spratt B.G."/>
            <person name="Parkhill J."/>
        </authorList>
    </citation>
    <scope>NUCLEOTIDE SEQUENCE [LARGE SCALE GENOMIC DNA]</scope>
    <source>
        <strain>MRSA252</strain>
    </source>
</reference>